<feature type="initiator methionine" description="Removed" evidence="2">
    <location>
        <position position="1"/>
    </location>
</feature>
<feature type="chain" id="PRO_0000078214" description="Neprilysin">
    <location>
        <begin position="2"/>
        <end position="750"/>
    </location>
</feature>
<feature type="topological domain" description="Cytoplasmic" evidence="3">
    <location>
        <begin position="2"/>
        <end position="28"/>
    </location>
</feature>
<feature type="transmembrane region" description="Helical; Signal-anchor for type II membrane protein" evidence="3">
    <location>
        <begin position="29"/>
        <end position="51"/>
    </location>
</feature>
<feature type="topological domain" description="Extracellular" evidence="3">
    <location>
        <begin position="52"/>
        <end position="750"/>
    </location>
</feature>
<feature type="domain" description="Peptidase M13" evidence="4">
    <location>
        <begin position="56"/>
        <end position="750"/>
    </location>
</feature>
<feature type="short sequence motif" description="Stop-transfer sequence" evidence="3">
    <location>
        <begin position="16"/>
        <end position="23"/>
    </location>
</feature>
<feature type="active site" evidence="4 5">
    <location>
        <position position="585"/>
    </location>
</feature>
<feature type="active site" description="Proton donor" evidence="4">
    <location>
        <position position="651"/>
    </location>
</feature>
<feature type="binding site" evidence="1">
    <location>
        <position position="103"/>
    </location>
    <ligand>
        <name>a peptide</name>
        <dbReference type="ChEBI" id="CHEBI:60466"/>
        <note>substrate</note>
    </ligand>
</feature>
<feature type="binding site" evidence="4 5">
    <location>
        <position position="584"/>
    </location>
    <ligand>
        <name>Zn(2+)</name>
        <dbReference type="ChEBI" id="CHEBI:29105"/>
        <note>catalytic</note>
    </ligand>
</feature>
<feature type="binding site" evidence="4 5">
    <location>
        <position position="588"/>
    </location>
    <ligand>
        <name>Zn(2+)</name>
        <dbReference type="ChEBI" id="CHEBI:29105"/>
        <note>catalytic</note>
    </ligand>
</feature>
<feature type="binding site" evidence="4">
    <location>
        <position position="647"/>
    </location>
    <ligand>
        <name>Zn(2+)</name>
        <dbReference type="ChEBI" id="CHEBI:29105"/>
        <note>catalytic</note>
    </ligand>
</feature>
<feature type="modified residue" description="Phosphoserine" evidence="14">
    <location>
        <position position="4"/>
    </location>
</feature>
<feature type="modified residue" description="Phosphoserine" evidence="14">
    <location>
        <position position="6"/>
    </location>
</feature>
<feature type="lipid moiety-binding region" description="N-myristoyl glycine" evidence="2">
    <location>
        <position position="2"/>
    </location>
</feature>
<feature type="glycosylation site" description="N-linked (GlcNAc...) asparagine" evidence="6">
    <location>
        <position position="145"/>
    </location>
</feature>
<feature type="glycosylation site" description="N-linked (GlcNAc...) asparagine" evidence="3">
    <location>
        <position position="211"/>
    </location>
</feature>
<feature type="glycosylation site" description="N-linked (GlcNAc...) asparagine" evidence="6">
    <location>
        <position position="285"/>
    </location>
</feature>
<feature type="glycosylation site" description="N-linked (GlcNAc...) asparagine" evidence="6">
    <location>
        <position position="311"/>
    </location>
</feature>
<feature type="glycosylation site" description="N-linked (GlcNAc...) asparagine" evidence="2">
    <location>
        <position position="325"/>
    </location>
</feature>
<feature type="glycosylation site" description="N-linked (GlcNAc...) asparagine" evidence="2">
    <location>
        <position position="628"/>
    </location>
</feature>
<feature type="disulfide bond" evidence="4">
    <location>
        <begin position="57"/>
        <end position="62"/>
    </location>
</feature>
<feature type="disulfide bond" evidence="4">
    <location>
        <begin position="80"/>
        <end position="735"/>
    </location>
</feature>
<feature type="disulfide bond" evidence="4">
    <location>
        <begin position="88"/>
        <end position="695"/>
    </location>
</feature>
<feature type="disulfide bond" evidence="4">
    <location>
        <begin position="143"/>
        <end position="411"/>
    </location>
</feature>
<feature type="disulfide bond" evidence="4">
    <location>
        <begin position="234"/>
        <end position="242"/>
    </location>
</feature>
<feature type="disulfide bond" evidence="4">
    <location>
        <begin position="621"/>
        <end position="747"/>
    </location>
</feature>
<feature type="sequence conflict" description="In Ref. 1; AAA37386." evidence="12" ref="1">
    <original>D</original>
    <variation>G</variation>
    <location>
        <position position="230"/>
    </location>
</feature>
<feature type="strand" evidence="15">
    <location>
        <begin position="9"/>
        <end position="12"/>
    </location>
</feature>
<feature type="strand" evidence="15">
    <location>
        <begin position="19"/>
        <end position="21"/>
    </location>
</feature>
<comment type="function">
    <text evidence="2 7">Thermolysin-like specificity, but is almost confined on acting on polypeptides of up to 30 amino acids (By similarity). Biologically important in the destruction of opioid peptides such as Met- and Leu-enkephalins by cleavage of a Gly-Phe bond (By similarity). Catalyzes cleavage of bradykinin, substance P and neurotensin peptides (By similarity). Able to cleave angiotensin-1, angiotensin-2 and angiotensin 1-9 (By similarity). Involved in the degradation of the atrial natriuretic factor (ANF) (By similarity). Displays UV-inducible elastase activity toward skin preelastic and elastic fibers (PubMed:20876573).</text>
</comment>
<comment type="catalytic activity">
    <reaction evidence="2">
        <text>Preferential cleavage of polypeptides between hydrophobic residues, particularly with Phe or Tyr at P1'.</text>
        <dbReference type="EC" id="3.4.24.11"/>
    </reaction>
</comment>
<comment type="catalytic activity">
    <reaction evidence="2">
        <text>substance P + H2O = substance P(1-9) + L-Leu-L-Met-NH2</text>
        <dbReference type="Rhea" id="RHEA:71459"/>
        <dbReference type="ChEBI" id="CHEBI:15377"/>
        <dbReference type="ChEBI" id="CHEBI:190692"/>
        <dbReference type="ChEBI" id="CHEBI:190693"/>
        <dbReference type="ChEBI" id="CHEBI:190700"/>
    </reaction>
    <physiologicalReaction direction="left-to-right" evidence="2">
        <dbReference type="Rhea" id="RHEA:71460"/>
    </physiologicalReaction>
</comment>
<comment type="catalytic activity">
    <reaction evidence="2">
        <text>substance P + H2O = substance P(1-7) + L-Phe-Gly-L-Leu-L-Met-NH2</text>
        <dbReference type="Rhea" id="RHEA:71467"/>
        <dbReference type="ChEBI" id="CHEBI:15377"/>
        <dbReference type="ChEBI" id="CHEBI:190692"/>
        <dbReference type="ChEBI" id="CHEBI:190695"/>
        <dbReference type="ChEBI" id="CHEBI:190698"/>
    </reaction>
    <physiologicalReaction direction="left-to-right" evidence="2">
        <dbReference type="Rhea" id="RHEA:71468"/>
    </physiologicalReaction>
</comment>
<comment type="catalytic activity">
    <reaction evidence="2">
        <text>neurotensin + H2O = neurotensin(1-11) + L-isoleucyl-L-leucine</text>
        <dbReference type="Rhea" id="RHEA:71475"/>
        <dbReference type="ChEBI" id="CHEBI:15377"/>
        <dbReference type="ChEBI" id="CHEBI:147362"/>
        <dbReference type="ChEBI" id="CHEBI:190704"/>
        <dbReference type="ChEBI" id="CHEBI:190706"/>
    </reaction>
    <physiologicalReaction direction="left-to-right" evidence="2">
        <dbReference type="Rhea" id="RHEA:71476"/>
    </physiologicalReaction>
</comment>
<comment type="catalytic activity">
    <reaction evidence="2">
        <text>neurotensin + H2O = neurotensin(1-10) + L-tyrosyl-L-isoleucyl-L-leucine</text>
        <dbReference type="Rhea" id="RHEA:71479"/>
        <dbReference type="ChEBI" id="CHEBI:15377"/>
        <dbReference type="ChEBI" id="CHEBI:147362"/>
        <dbReference type="ChEBI" id="CHEBI:190705"/>
        <dbReference type="ChEBI" id="CHEBI:190707"/>
    </reaction>
    <physiologicalReaction direction="left-to-right" evidence="2">
        <dbReference type="Rhea" id="RHEA:71480"/>
    </physiologicalReaction>
</comment>
<comment type="cofactor">
    <cofactor evidence="2">
        <name>Zn(2+)</name>
        <dbReference type="ChEBI" id="CHEBI:29105"/>
    </cofactor>
    <text evidence="2">Binds 1 zinc ion per subunit.</text>
</comment>
<comment type="subcellular location">
    <subcellularLocation>
        <location evidence="2">Cell membrane</location>
        <topology evidence="3">Single-pass type II membrane protein</topology>
    </subcellularLocation>
</comment>
<comment type="PTM">
    <text evidence="2">Myristoylation is a determinant of membrane targeting.</text>
</comment>
<comment type="PTM">
    <text evidence="2">Glycosylation at Asn-628 is necessary both for surface expression and neutral endopeptidase activity.</text>
</comment>
<comment type="disruption phenotype">
    <text evidence="8">Mice are overtly normal in appearance and size and do not show obvious abnormalities in motor performance or coordination. Nerve conduction studies reveal no significant differences between mutant and control animals.</text>
</comment>
<comment type="similarity">
    <text evidence="4 12">Belongs to the peptidase M13 family.</text>
</comment>
<accession>Q61391</accession>
<accession>Q6NXX5</accession>
<accession>Q8K251</accession>
<reference key="1">
    <citation type="journal article" date="1992" name="J. Immunol.">
        <title>Murine common acute lymphoblastic leukemia antigen (CD10 neutral endopeptidase 24.11). Molecular characterization, chromosomal localization, and modeling of the active site.</title>
        <authorList>
            <person name="Chen C.Y."/>
            <person name="Salles G."/>
            <person name="Seldin M.F."/>
            <person name="Kister A.E."/>
            <person name="Reinher E.L."/>
            <person name="Shipp M.A."/>
        </authorList>
    </citation>
    <scope>NUCLEOTIDE SEQUENCE [MRNA]</scope>
    <source>
        <strain>BALB/cJ</strain>
    </source>
</reference>
<reference key="2">
    <citation type="journal article" date="2005" name="Science">
        <title>The transcriptional landscape of the mammalian genome.</title>
        <authorList>
            <person name="Carninci P."/>
            <person name="Kasukawa T."/>
            <person name="Katayama S."/>
            <person name="Gough J."/>
            <person name="Frith M.C."/>
            <person name="Maeda N."/>
            <person name="Oyama R."/>
            <person name="Ravasi T."/>
            <person name="Lenhard B."/>
            <person name="Wells C."/>
            <person name="Kodzius R."/>
            <person name="Shimokawa K."/>
            <person name="Bajic V.B."/>
            <person name="Brenner S.E."/>
            <person name="Batalov S."/>
            <person name="Forrest A.R."/>
            <person name="Zavolan M."/>
            <person name="Davis M.J."/>
            <person name="Wilming L.G."/>
            <person name="Aidinis V."/>
            <person name="Allen J.E."/>
            <person name="Ambesi-Impiombato A."/>
            <person name="Apweiler R."/>
            <person name="Aturaliya R.N."/>
            <person name="Bailey T.L."/>
            <person name="Bansal M."/>
            <person name="Baxter L."/>
            <person name="Beisel K.W."/>
            <person name="Bersano T."/>
            <person name="Bono H."/>
            <person name="Chalk A.M."/>
            <person name="Chiu K.P."/>
            <person name="Choudhary V."/>
            <person name="Christoffels A."/>
            <person name="Clutterbuck D.R."/>
            <person name="Crowe M.L."/>
            <person name="Dalla E."/>
            <person name="Dalrymple B.P."/>
            <person name="de Bono B."/>
            <person name="Della Gatta G."/>
            <person name="di Bernardo D."/>
            <person name="Down T."/>
            <person name="Engstrom P."/>
            <person name="Fagiolini M."/>
            <person name="Faulkner G."/>
            <person name="Fletcher C.F."/>
            <person name="Fukushima T."/>
            <person name="Furuno M."/>
            <person name="Futaki S."/>
            <person name="Gariboldi M."/>
            <person name="Georgii-Hemming P."/>
            <person name="Gingeras T.R."/>
            <person name="Gojobori T."/>
            <person name="Green R.E."/>
            <person name="Gustincich S."/>
            <person name="Harbers M."/>
            <person name="Hayashi Y."/>
            <person name="Hensch T.K."/>
            <person name="Hirokawa N."/>
            <person name="Hill D."/>
            <person name="Huminiecki L."/>
            <person name="Iacono M."/>
            <person name="Ikeo K."/>
            <person name="Iwama A."/>
            <person name="Ishikawa T."/>
            <person name="Jakt M."/>
            <person name="Kanapin A."/>
            <person name="Katoh M."/>
            <person name="Kawasawa Y."/>
            <person name="Kelso J."/>
            <person name="Kitamura H."/>
            <person name="Kitano H."/>
            <person name="Kollias G."/>
            <person name="Krishnan S.P."/>
            <person name="Kruger A."/>
            <person name="Kummerfeld S.K."/>
            <person name="Kurochkin I.V."/>
            <person name="Lareau L.F."/>
            <person name="Lazarevic D."/>
            <person name="Lipovich L."/>
            <person name="Liu J."/>
            <person name="Liuni S."/>
            <person name="McWilliam S."/>
            <person name="Madan Babu M."/>
            <person name="Madera M."/>
            <person name="Marchionni L."/>
            <person name="Matsuda H."/>
            <person name="Matsuzawa S."/>
            <person name="Miki H."/>
            <person name="Mignone F."/>
            <person name="Miyake S."/>
            <person name="Morris K."/>
            <person name="Mottagui-Tabar S."/>
            <person name="Mulder N."/>
            <person name="Nakano N."/>
            <person name="Nakauchi H."/>
            <person name="Ng P."/>
            <person name="Nilsson R."/>
            <person name="Nishiguchi S."/>
            <person name="Nishikawa S."/>
            <person name="Nori F."/>
            <person name="Ohara O."/>
            <person name="Okazaki Y."/>
            <person name="Orlando V."/>
            <person name="Pang K.C."/>
            <person name="Pavan W.J."/>
            <person name="Pavesi G."/>
            <person name="Pesole G."/>
            <person name="Petrovsky N."/>
            <person name="Piazza S."/>
            <person name="Reed J."/>
            <person name="Reid J.F."/>
            <person name="Ring B.Z."/>
            <person name="Ringwald M."/>
            <person name="Rost B."/>
            <person name="Ruan Y."/>
            <person name="Salzberg S.L."/>
            <person name="Sandelin A."/>
            <person name="Schneider C."/>
            <person name="Schoenbach C."/>
            <person name="Sekiguchi K."/>
            <person name="Semple C.A."/>
            <person name="Seno S."/>
            <person name="Sessa L."/>
            <person name="Sheng Y."/>
            <person name="Shibata Y."/>
            <person name="Shimada H."/>
            <person name="Shimada K."/>
            <person name="Silva D."/>
            <person name="Sinclair B."/>
            <person name="Sperling S."/>
            <person name="Stupka E."/>
            <person name="Sugiura K."/>
            <person name="Sultana R."/>
            <person name="Takenaka Y."/>
            <person name="Taki K."/>
            <person name="Tammoja K."/>
            <person name="Tan S.L."/>
            <person name="Tang S."/>
            <person name="Taylor M.S."/>
            <person name="Tegner J."/>
            <person name="Teichmann S.A."/>
            <person name="Ueda H.R."/>
            <person name="van Nimwegen E."/>
            <person name="Verardo R."/>
            <person name="Wei C.L."/>
            <person name="Yagi K."/>
            <person name="Yamanishi H."/>
            <person name="Zabarovsky E."/>
            <person name="Zhu S."/>
            <person name="Zimmer A."/>
            <person name="Hide W."/>
            <person name="Bult C."/>
            <person name="Grimmond S.M."/>
            <person name="Teasdale R.D."/>
            <person name="Liu E.T."/>
            <person name="Brusic V."/>
            <person name="Quackenbush J."/>
            <person name="Wahlestedt C."/>
            <person name="Mattick J.S."/>
            <person name="Hume D.A."/>
            <person name="Kai C."/>
            <person name="Sasaki D."/>
            <person name="Tomaru Y."/>
            <person name="Fukuda S."/>
            <person name="Kanamori-Katayama M."/>
            <person name="Suzuki M."/>
            <person name="Aoki J."/>
            <person name="Arakawa T."/>
            <person name="Iida J."/>
            <person name="Imamura K."/>
            <person name="Itoh M."/>
            <person name="Kato T."/>
            <person name="Kawaji H."/>
            <person name="Kawagashira N."/>
            <person name="Kawashima T."/>
            <person name="Kojima M."/>
            <person name="Kondo S."/>
            <person name="Konno H."/>
            <person name="Nakano K."/>
            <person name="Ninomiya N."/>
            <person name="Nishio T."/>
            <person name="Okada M."/>
            <person name="Plessy C."/>
            <person name="Shibata K."/>
            <person name="Shiraki T."/>
            <person name="Suzuki S."/>
            <person name="Tagami M."/>
            <person name="Waki K."/>
            <person name="Watahiki A."/>
            <person name="Okamura-Oho Y."/>
            <person name="Suzuki H."/>
            <person name="Kawai J."/>
            <person name="Hayashizaki Y."/>
        </authorList>
    </citation>
    <scope>NUCLEOTIDE SEQUENCE [LARGE SCALE MRNA]</scope>
    <source>
        <strain>C57BL/6J</strain>
        <tissue>Epididymis</tissue>
        <tissue>Testis</tissue>
    </source>
</reference>
<reference key="3">
    <citation type="journal article" date="2004" name="Genome Res.">
        <title>The status, quality, and expansion of the NIH full-length cDNA project: the Mammalian Gene Collection (MGC).</title>
        <authorList>
            <consortium name="The MGC Project Team"/>
        </authorList>
    </citation>
    <scope>NUCLEOTIDE SEQUENCE [LARGE SCALE MRNA]</scope>
    <source>
        <strain>C57BL/6J</strain>
        <strain>FVB/N</strain>
        <tissue>Embryonic germ cell</tissue>
        <tissue>Mammary tumor</tissue>
    </source>
</reference>
<reference key="4">
    <citation type="submission" date="2009-01" db="UniProtKB">
        <authorList>
            <person name="Lubec G."/>
            <person name="Sunyer B."/>
            <person name="Chen W.-Q."/>
        </authorList>
    </citation>
    <scope>PROTEIN SEQUENCE OF 473-479</scope>
    <scope>IDENTIFICATION BY MASS SPECTROMETRY</scope>
    <source>
        <strain>OF1</strain>
        <tissue>Hippocampus</tissue>
    </source>
</reference>
<reference key="5">
    <citation type="journal article" date="2009" name="Nat. Biotechnol.">
        <title>Mass-spectrometric identification and relative quantification of N-linked cell surface glycoproteins.</title>
        <authorList>
            <person name="Wollscheid B."/>
            <person name="Bausch-Fluck D."/>
            <person name="Henderson C."/>
            <person name="O'Brien R."/>
            <person name="Bibel M."/>
            <person name="Schiess R."/>
            <person name="Aebersold R."/>
            <person name="Watts J.D."/>
        </authorList>
    </citation>
    <scope>GLYCOSYLATION [LARGE SCALE ANALYSIS] AT ASN-145; ASN-285 AND ASN-311</scope>
</reference>
<reference key="6">
    <citation type="journal article" date="2010" name="Cell">
        <title>A tissue-specific atlas of mouse protein phosphorylation and expression.</title>
        <authorList>
            <person name="Huttlin E.L."/>
            <person name="Jedrychowski M.P."/>
            <person name="Elias J.E."/>
            <person name="Goswami T."/>
            <person name="Rad R."/>
            <person name="Beausoleil S.A."/>
            <person name="Villen J."/>
            <person name="Haas W."/>
            <person name="Sowa M.E."/>
            <person name="Gygi S.P."/>
        </authorList>
    </citation>
    <scope>PHOSPHORYLATION [LARGE SCALE ANALYSIS] AT SER-4 AND SER-6</scope>
    <scope>IDENTIFICATION BY MASS SPECTROMETRY [LARGE SCALE ANALYSIS]</scope>
    <source>
        <tissue>Brain</tissue>
        <tissue>Brown adipose tissue</tissue>
        <tissue>Kidney</tissue>
        <tissue>Lung</tissue>
        <tissue>Spleen</tissue>
        <tissue>Testis</tissue>
    </source>
</reference>
<reference key="7">
    <citation type="journal article" date="2010" name="J. Biol. Chem.">
        <title>Neprilysin is identical to skin fibroblast elastase: its role in skin aging and UV responses.</title>
        <authorList>
            <person name="Morisaki N."/>
            <person name="Moriwaki S."/>
            <person name="Sugiyama-Nakagiri Y."/>
            <person name="Haketa K."/>
            <person name="Takema Y."/>
            <person name="Imokawa G."/>
        </authorList>
    </citation>
    <scope>IDENTIFICATION AS SKIN FIBROBLAST ELASTASE</scope>
    <scope>FUNCTION</scope>
</reference>
<reference key="8">
    <citation type="journal article" date="2016" name="Am. J. Hum. Genet.">
        <title>Rare variants in MME, encoding metalloprotease neprilysin, are linked to late-onset autosomal-dominant axonal polyneuropathies.</title>
        <authorList>
            <person name="Auer-Grumbach M."/>
            <person name="Toegel S."/>
            <person name="Schabhuettl M."/>
            <person name="Weinmann D."/>
            <person name="Chiari C."/>
            <person name="Bennett D.L."/>
            <person name="Beetz C."/>
            <person name="Klein D."/>
            <person name="Andersen P.M."/>
            <person name="Boehme I."/>
            <person name="Fink-Puches R."/>
            <person name="Gonzalez M."/>
            <person name="Harms M.B."/>
            <person name="Motley W."/>
            <person name="Reilly M.M."/>
            <person name="Renner W."/>
            <person name="Rudnik-Schoeneborn S."/>
            <person name="Schlotter-Weigel B."/>
            <person name="Themistocleous A.C."/>
            <person name="Weishaupt J.H."/>
            <person name="Ludolph A.C."/>
            <person name="Wieland T."/>
            <person name="Tao F."/>
            <person name="Abreu L."/>
            <person name="Windhager R."/>
            <person name="Zitzelsberger M."/>
            <person name="Strom T.M."/>
            <person name="Walther T."/>
            <person name="Scherer S.S."/>
            <person name="Zuechner S."/>
            <person name="Martini R."/>
            <person name="Senderek J."/>
        </authorList>
    </citation>
    <scope>DISRUPTION PHENOTYPE</scope>
</reference>
<keyword id="KW-0002">3D-structure</keyword>
<keyword id="KW-1003">Cell membrane</keyword>
<keyword id="KW-0903">Direct protein sequencing</keyword>
<keyword id="KW-1015">Disulfide bond</keyword>
<keyword id="KW-0325">Glycoprotein</keyword>
<keyword id="KW-0378">Hydrolase</keyword>
<keyword id="KW-0449">Lipoprotein</keyword>
<keyword id="KW-0472">Membrane</keyword>
<keyword id="KW-0479">Metal-binding</keyword>
<keyword id="KW-0482">Metalloprotease</keyword>
<keyword id="KW-0519">Myristate</keyword>
<keyword id="KW-0597">Phosphoprotein</keyword>
<keyword id="KW-0645">Protease</keyword>
<keyword id="KW-1185">Reference proteome</keyword>
<keyword id="KW-0735">Signal-anchor</keyword>
<keyword id="KW-0812">Transmembrane</keyword>
<keyword id="KW-1133">Transmembrane helix</keyword>
<keyword id="KW-0862">Zinc</keyword>
<dbReference type="EC" id="3.4.24.11" evidence="2"/>
<dbReference type="EMBL" id="M81591">
    <property type="protein sequence ID" value="AAA37386.1"/>
    <property type="molecule type" value="mRNA"/>
</dbReference>
<dbReference type="EMBL" id="AK031446">
    <property type="protein sequence ID" value="BAC27410.1"/>
    <property type="molecule type" value="mRNA"/>
</dbReference>
<dbReference type="EMBL" id="AK033824">
    <property type="protein sequence ID" value="BAC28487.1"/>
    <property type="molecule type" value="mRNA"/>
</dbReference>
<dbReference type="EMBL" id="BC034092">
    <property type="protein sequence ID" value="AAH34092.1"/>
    <property type="molecule type" value="mRNA"/>
</dbReference>
<dbReference type="EMBL" id="BC066840">
    <property type="protein sequence ID" value="AAH66840.1"/>
    <property type="molecule type" value="mRNA"/>
</dbReference>
<dbReference type="CCDS" id="CCDS17381.1"/>
<dbReference type="RefSeq" id="NP_001276391.1">
    <property type="nucleotide sequence ID" value="NM_001289462.1"/>
</dbReference>
<dbReference type="RefSeq" id="NP_001276392.1">
    <property type="nucleotide sequence ID" value="NM_001289463.1"/>
</dbReference>
<dbReference type="RefSeq" id="NP_001344264.1">
    <property type="nucleotide sequence ID" value="NM_001357335.1"/>
</dbReference>
<dbReference type="RefSeq" id="NP_032630.2">
    <property type="nucleotide sequence ID" value="NM_008604.4"/>
</dbReference>
<dbReference type="RefSeq" id="XP_006501158.1">
    <property type="nucleotide sequence ID" value="XM_006501095.3"/>
</dbReference>
<dbReference type="RefSeq" id="XP_006501161.1">
    <property type="nucleotide sequence ID" value="XM_006501098.4"/>
</dbReference>
<dbReference type="PDB" id="2YVC">
    <property type="method" value="X-ray"/>
    <property type="resolution" value="3.20 A"/>
    <property type="chains" value="D/E/F=2-23"/>
</dbReference>
<dbReference type="PDBsum" id="2YVC"/>
<dbReference type="SMR" id="Q61391"/>
<dbReference type="BioGRID" id="201441">
    <property type="interactions" value="2"/>
</dbReference>
<dbReference type="FunCoup" id="Q61391">
    <property type="interactions" value="588"/>
</dbReference>
<dbReference type="STRING" id="10090.ENSMUSP00000142205"/>
<dbReference type="BindingDB" id="Q61391"/>
<dbReference type="ChEMBL" id="CHEMBL2642"/>
<dbReference type="MEROPS" id="M13.001"/>
<dbReference type="GlyConnect" id="2529">
    <property type="glycosylation" value="2 N-Linked glycans (2 sites)"/>
</dbReference>
<dbReference type="GlyCosmos" id="Q61391">
    <property type="glycosylation" value="6 sites, 6 glycans"/>
</dbReference>
<dbReference type="GlyGen" id="Q61391">
    <property type="glycosylation" value="8 sites, 6 N-linked glycans (4 sites), 1 O-linked glycan (1 site)"/>
</dbReference>
<dbReference type="iPTMnet" id="Q61391"/>
<dbReference type="PhosphoSitePlus" id="Q61391"/>
<dbReference type="SwissPalm" id="Q61391"/>
<dbReference type="jPOST" id="Q61391"/>
<dbReference type="PaxDb" id="10090-ENSMUSP00000029400"/>
<dbReference type="PeptideAtlas" id="Q61391"/>
<dbReference type="ProteomicsDB" id="287378"/>
<dbReference type="Antibodypedia" id="3658">
    <property type="antibodies" value="2649 antibodies from 55 providers"/>
</dbReference>
<dbReference type="DNASU" id="17380"/>
<dbReference type="Ensembl" id="ENSMUST00000029400.7">
    <property type="protein sequence ID" value="ENSMUSP00000029400.2"/>
    <property type="gene ID" value="ENSMUSG00000027820.13"/>
</dbReference>
<dbReference type="Ensembl" id="ENSMUST00000194134.6">
    <property type="protein sequence ID" value="ENSMUSP00000142205.2"/>
    <property type="gene ID" value="ENSMUSG00000027820.13"/>
</dbReference>
<dbReference type="Ensembl" id="ENSMUST00000194150.6">
    <property type="protein sequence ID" value="ENSMUSP00000141544.2"/>
    <property type="gene ID" value="ENSMUSG00000027820.13"/>
</dbReference>
<dbReference type="GeneID" id="17380"/>
<dbReference type="KEGG" id="mmu:17380"/>
<dbReference type="UCSC" id="uc008pjp.2">
    <property type="organism name" value="mouse"/>
</dbReference>
<dbReference type="AGR" id="MGI:97004"/>
<dbReference type="CTD" id="4311"/>
<dbReference type="MGI" id="MGI:97004">
    <property type="gene designation" value="Mme"/>
</dbReference>
<dbReference type="VEuPathDB" id="HostDB:ENSMUSG00000027820"/>
<dbReference type="eggNOG" id="KOG3624">
    <property type="taxonomic scope" value="Eukaryota"/>
</dbReference>
<dbReference type="GeneTree" id="ENSGT00940000156745"/>
<dbReference type="HOGENOM" id="CLU_006187_8_0_1"/>
<dbReference type="InParanoid" id="Q61391"/>
<dbReference type="OMA" id="RNHDAWY"/>
<dbReference type="OrthoDB" id="6475849at2759"/>
<dbReference type="PhylomeDB" id="Q61391"/>
<dbReference type="TreeFam" id="TF315192"/>
<dbReference type="BRENDA" id="3.4.24.11">
    <property type="organism ID" value="3474"/>
</dbReference>
<dbReference type="Reactome" id="R-MMU-2022377">
    <property type="pathway name" value="Metabolism of Angiotensinogen to Angiotensins"/>
</dbReference>
<dbReference type="Reactome" id="R-MMU-5578768">
    <property type="pathway name" value="Physiological factors"/>
</dbReference>
<dbReference type="Reactome" id="R-MMU-6798695">
    <property type="pathway name" value="Neutrophil degranulation"/>
</dbReference>
<dbReference type="BioGRID-ORCS" id="17380">
    <property type="hits" value="3 hits in 79 CRISPR screens"/>
</dbReference>
<dbReference type="ChiTaRS" id="Mme">
    <property type="organism name" value="mouse"/>
</dbReference>
<dbReference type="EvolutionaryTrace" id="Q61391"/>
<dbReference type="PRO" id="PR:Q61391"/>
<dbReference type="Proteomes" id="UP000000589">
    <property type="component" value="Chromosome 3"/>
</dbReference>
<dbReference type="RNAct" id="Q61391">
    <property type="molecule type" value="protein"/>
</dbReference>
<dbReference type="Bgee" id="ENSMUSG00000027820">
    <property type="expression patterns" value="Expressed in epithelium of lens and 217 other cell types or tissues"/>
</dbReference>
<dbReference type="ExpressionAtlas" id="Q61391">
    <property type="expression patterns" value="baseline and differential"/>
</dbReference>
<dbReference type="GO" id="GO:0030424">
    <property type="term" value="C:axon"/>
    <property type="evidence" value="ECO:0000314"/>
    <property type="project" value="MGI"/>
</dbReference>
<dbReference type="GO" id="GO:0005903">
    <property type="term" value="C:brush border"/>
    <property type="evidence" value="ECO:0000250"/>
    <property type="project" value="UniProtKB"/>
</dbReference>
<dbReference type="GO" id="GO:0005813">
    <property type="term" value="C:centrosome"/>
    <property type="evidence" value="ECO:0007669"/>
    <property type="project" value="Ensembl"/>
</dbReference>
<dbReference type="GO" id="GO:0036064">
    <property type="term" value="C:ciliary basal body"/>
    <property type="evidence" value="ECO:0007669"/>
    <property type="project" value="Ensembl"/>
</dbReference>
<dbReference type="GO" id="GO:0005737">
    <property type="term" value="C:cytoplasm"/>
    <property type="evidence" value="ECO:0000250"/>
    <property type="project" value="UniProtKB"/>
</dbReference>
<dbReference type="GO" id="GO:0005829">
    <property type="term" value="C:cytosol"/>
    <property type="evidence" value="ECO:0007669"/>
    <property type="project" value="Ensembl"/>
</dbReference>
<dbReference type="GO" id="GO:0030425">
    <property type="term" value="C:dendrite"/>
    <property type="evidence" value="ECO:0000314"/>
    <property type="project" value="MGI"/>
</dbReference>
<dbReference type="GO" id="GO:0005769">
    <property type="term" value="C:early endosome"/>
    <property type="evidence" value="ECO:0007669"/>
    <property type="project" value="Ensembl"/>
</dbReference>
<dbReference type="GO" id="GO:0005576">
    <property type="term" value="C:extracellular region"/>
    <property type="evidence" value="ECO:0000315"/>
    <property type="project" value="MGI"/>
</dbReference>
<dbReference type="GO" id="GO:0016020">
    <property type="term" value="C:membrane"/>
    <property type="evidence" value="ECO:0000314"/>
    <property type="project" value="MGI"/>
</dbReference>
<dbReference type="GO" id="GO:0045121">
    <property type="term" value="C:membrane raft"/>
    <property type="evidence" value="ECO:0007669"/>
    <property type="project" value="Ensembl"/>
</dbReference>
<dbReference type="GO" id="GO:0044306">
    <property type="term" value="C:neuron projection terminus"/>
    <property type="evidence" value="ECO:0000314"/>
    <property type="project" value="MGI"/>
</dbReference>
<dbReference type="GO" id="GO:0043025">
    <property type="term" value="C:neuronal cell body"/>
    <property type="evidence" value="ECO:0007669"/>
    <property type="project" value="Ensembl"/>
</dbReference>
<dbReference type="GO" id="GO:0005654">
    <property type="term" value="C:nucleoplasm"/>
    <property type="evidence" value="ECO:0007669"/>
    <property type="project" value="Ensembl"/>
</dbReference>
<dbReference type="GO" id="GO:0005886">
    <property type="term" value="C:plasma membrane"/>
    <property type="evidence" value="ECO:0000250"/>
    <property type="project" value="UniProtKB"/>
</dbReference>
<dbReference type="GO" id="GO:0045202">
    <property type="term" value="C:synapse"/>
    <property type="evidence" value="ECO:0000314"/>
    <property type="project" value="MGI"/>
</dbReference>
<dbReference type="GO" id="GO:0008021">
    <property type="term" value="C:synaptic vesicle"/>
    <property type="evidence" value="ECO:0000314"/>
    <property type="project" value="MGI"/>
</dbReference>
<dbReference type="GO" id="GO:0005802">
    <property type="term" value="C:trans-Golgi network"/>
    <property type="evidence" value="ECO:0007669"/>
    <property type="project" value="Ensembl"/>
</dbReference>
<dbReference type="GO" id="GO:1901612">
    <property type="term" value="F:cardiolipin binding"/>
    <property type="evidence" value="ECO:0007669"/>
    <property type="project" value="Ensembl"/>
</dbReference>
<dbReference type="GO" id="GO:0004181">
    <property type="term" value="F:metallocarboxypeptidase activity"/>
    <property type="evidence" value="ECO:0000315"/>
    <property type="project" value="MGI"/>
</dbReference>
<dbReference type="GO" id="GO:0004222">
    <property type="term" value="F:metalloendopeptidase activity"/>
    <property type="evidence" value="ECO:0000250"/>
    <property type="project" value="UniProtKB"/>
</dbReference>
<dbReference type="GO" id="GO:0008237">
    <property type="term" value="F:metallopeptidase activity"/>
    <property type="evidence" value="ECO:0000316"/>
    <property type="project" value="MGI"/>
</dbReference>
<dbReference type="GO" id="GO:0070012">
    <property type="term" value="F:oligopeptidase activity"/>
    <property type="evidence" value="ECO:0007669"/>
    <property type="project" value="Ensembl"/>
</dbReference>
<dbReference type="GO" id="GO:0008233">
    <property type="term" value="F:peptidase activity"/>
    <property type="evidence" value="ECO:0000314"/>
    <property type="project" value="MGI"/>
</dbReference>
<dbReference type="GO" id="GO:0042277">
    <property type="term" value="F:peptide binding"/>
    <property type="evidence" value="ECO:0000250"/>
    <property type="project" value="UniProtKB"/>
</dbReference>
<dbReference type="GO" id="GO:0001786">
    <property type="term" value="F:phosphatidylserine binding"/>
    <property type="evidence" value="ECO:0007669"/>
    <property type="project" value="Ensembl"/>
</dbReference>
<dbReference type="GO" id="GO:0042803">
    <property type="term" value="F:protein homodimerization activity"/>
    <property type="evidence" value="ECO:0007669"/>
    <property type="project" value="Ensembl"/>
</dbReference>
<dbReference type="GO" id="GO:0008270">
    <property type="term" value="F:zinc ion binding"/>
    <property type="evidence" value="ECO:0000250"/>
    <property type="project" value="UniProtKB"/>
</dbReference>
<dbReference type="GO" id="GO:0097242">
    <property type="term" value="P:amyloid-beta clearance"/>
    <property type="evidence" value="ECO:0000316"/>
    <property type="project" value="ARUK-UCL"/>
</dbReference>
<dbReference type="GO" id="GO:0150094">
    <property type="term" value="P:amyloid-beta clearance by cellular catabolic process"/>
    <property type="evidence" value="ECO:0007669"/>
    <property type="project" value="Ensembl"/>
</dbReference>
<dbReference type="GO" id="GO:0050435">
    <property type="term" value="P:amyloid-beta metabolic process"/>
    <property type="evidence" value="ECO:0000314"/>
    <property type="project" value="MGI"/>
</dbReference>
<dbReference type="GO" id="GO:0002003">
    <property type="term" value="P:angiotensin maturation"/>
    <property type="evidence" value="ECO:0000315"/>
    <property type="project" value="MGI"/>
</dbReference>
<dbReference type="GO" id="GO:0010815">
    <property type="term" value="P:bradykinin catabolic process"/>
    <property type="evidence" value="ECO:0000250"/>
    <property type="project" value="UniProtKB"/>
</dbReference>
<dbReference type="GO" id="GO:0071345">
    <property type="term" value="P:cellular response to cytokine stimulus"/>
    <property type="evidence" value="ECO:0000250"/>
    <property type="project" value="UniProtKB"/>
</dbReference>
<dbReference type="GO" id="GO:0071492">
    <property type="term" value="P:cellular response to UV-A"/>
    <property type="evidence" value="ECO:0000250"/>
    <property type="project" value="UniProtKB"/>
</dbReference>
<dbReference type="GO" id="GO:0071493">
    <property type="term" value="P:cellular response to UV-B"/>
    <property type="evidence" value="ECO:0000250"/>
    <property type="project" value="UniProtKB"/>
</dbReference>
<dbReference type="GO" id="GO:0046449">
    <property type="term" value="P:creatinine metabolic process"/>
    <property type="evidence" value="ECO:0000250"/>
    <property type="project" value="UniProtKB"/>
</dbReference>
<dbReference type="GO" id="GO:0042447">
    <property type="term" value="P:hormone catabolic process"/>
    <property type="evidence" value="ECO:0000250"/>
    <property type="project" value="UniProtKB"/>
</dbReference>
<dbReference type="GO" id="GO:0001822">
    <property type="term" value="P:kidney development"/>
    <property type="evidence" value="ECO:0000250"/>
    <property type="project" value="UniProtKB"/>
</dbReference>
<dbReference type="GO" id="GO:0007611">
    <property type="term" value="P:learning or memory"/>
    <property type="evidence" value="ECO:0007669"/>
    <property type="project" value="Ensembl"/>
</dbReference>
<dbReference type="GO" id="GO:0030324">
    <property type="term" value="P:lung development"/>
    <property type="evidence" value="ECO:0007669"/>
    <property type="project" value="Ensembl"/>
</dbReference>
<dbReference type="GO" id="GO:0061837">
    <property type="term" value="P:neuropeptide processing"/>
    <property type="evidence" value="ECO:0007669"/>
    <property type="project" value="Ensembl"/>
</dbReference>
<dbReference type="GO" id="GO:0006518">
    <property type="term" value="P:peptide metabolic process"/>
    <property type="evidence" value="ECO:0000250"/>
    <property type="project" value="UniProtKB"/>
</dbReference>
<dbReference type="GO" id="GO:0001890">
    <property type="term" value="P:placenta development"/>
    <property type="evidence" value="ECO:0007669"/>
    <property type="project" value="Ensembl"/>
</dbReference>
<dbReference type="GO" id="GO:1900273">
    <property type="term" value="P:positive regulation of long-term synaptic potentiation"/>
    <property type="evidence" value="ECO:0000316"/>
    <property type="project" value="ARUK-UCL"/>
</dbReference>
<dbReference type="GO" id="GO:0050769">
    <property type="term" value="P:positive regulation of neurogenesis"/>
    <property type="evidence" value="ECO:0007669"/>
    <property type="project" value="Ensembl"/>
</dbReference>
<dbReference type="GO" id="GO:0030163">
    <property type="term" value="P:protein catabolic process"/>
    <property type="evidence" value="ECO:0007669"/>
    <property type="project" value="Ensembl"/>
</dbReference>
<dbReference type="GO" id="GO:0006508">
    <property type="term" value="P:proteolysis"/>
    <property type="evidence" value="ECO:0000250"/>
    <property type="project" value="UniProtKB"/>
</dbReference>
<dbReference type="GO" id="GO:0090399">
    <property type="term" value="P:replicative senescence"/>
    <property type="evidence" value="ECO:0000250"/>
    <property type="project" value="UniProtKB"/>
</dbReference>
<dbReference type="GO" id="GO:0043627">
    <property type="term" value="P:response to estrogen"/>
    <property type="evidence" value="ECO:0007669"/>
    <property type="project" value="Ensembl"/>
</dbReference>
<dbReference type="GO" id="GO:0019233">
    <property type="term" value="P:sensory perception of pain"/>
    <property type="evidence" value="ECO:0000315"/>
    <property type="project" value="UniProtKB"/>
</dbReference>
<dbReference type="GO" id="GO:0010814">
    <property type="term" value="P:substance P catabolic process"/>
    <property type="evidence" value="ECO:0000250"/>
    <property type="project" value="UniProtKB"/>
</dbReference>
<dbReference type="CDD" id="cd08662">
    <property type="entry name" value="M13"/>
    <property type="match status" value="1"/>
</dbReference>
<dbReference type="FunFam" id="1.10.1380.10:FF:000002">
    <property type="entry name" value="Membrane metalloendopeptidase"/>
    <property type="match status" value="1"/>
</dbReference>
<dbReference type="Gene3D" id="3.40.390.10">
    <property type="entry name" value="Collagenase (Catalytic Domain)"/>
    <property type="match status" value="1"/>
</dbReference>
<dbReference type="Gene3D" id="1.10.1380.10">
    <property type="entry name" value="Neutral endopeptidase , domain2"/>
    <property type="match status" value="1"/>
</dbReference>
<dbReference type="IDEAL" id="IID50229"/>
<dbReference type="InterPro" id="IPR024079">
    <property type="entry name" value="MetalloPept_cat_dom_sf"/>
</dbReference>
<dbReference type="InterPro" id="IPR000718">
    <property type="entry name" value="Peptidase_M13"/>
</dbReference>
<dbReference type="InterPro" id="IPR018497">
    <property type="entry name" value="Peptidase_M13_C"/>
</dbReference>
<dbReference type="InterPro" id="IPR042089">
    <property type="entry name" value="Peptidase_M13_dom_2"/>
</dbReference>
<dbReference type="InterPro" id="IPR008753">
    <property type="entry name" value="Peptidase_M13_N"/>
</dbReference>
<dbReference type="PANTHER" id="PTHR11733:SF114">
    <property type="entry name" value="NEPRILYSIN"/>
    <property type="match status" value="1"/>
</dbReference>
<dbReference type="PANTHER" id="PTHR11733">
    <property type="entry name" value="ZINC METALLOPROTEASE FAMILY M13 NEPRILYSIN-RELATED"/>
    <property type="match status" value="1"/>
</dbReference>
<dbReference type="Pfam" id="PF01431">
    <property type="entry name" value="Peptidase_M13"/>
    <property type="match status" value="1"/>
</dbReference>
<dbReference type="Pfam" id="PF05649">
    <property type="entry name" value="Peptidase_M13_N"/>
    <property type="match status" value="1"/>
</dbReference>
<dbReference type="PRINTS" id="PR00786">
    <property type="entry name" value="NEPRILYSIN"/>
</dbReference>
<dbReference type="SUPFAM" id="SSF55486">
    <property type="entry name" value="Metalloproteases ('zincins'), catalytic domain"/>
    <property type="match status" value="1"/>
</dbReference>
<dbReference type="PROSITE" id="PS51885">
    <property type="entry name" value="NEPRILYSIN"/>
    <property type="match status" value="1"/>
</dbReference>
<dbReference type="PROSITE" id="PS00142">
    <property type="entry name" value="ZINC_PROTEASE"/>
    <property type="match status" value="1"/>
</dbReference>
<gene>
    <name evidence="11 13" type="primary">Mme</name>
</gene>
<sequence>MGRSESQMDITDINAPKPKKKQRWTPLEISLSVLVLLLTIIAVTMIALYATYDDGICKSSDCIKSAARLIQNMDASVEPCTDFFKYACGGWLKRNVIPETSSRYSNFDILRDELEVILKDVLQEPKTEDIVAVQKAKTLYRSCINESAIDSRGGQPLLKLLPDIYGWPVASDNWDQTYGTSWTAEKSIAQLNSKYGKKVLINFFVGTDDKNSTQHIIHFDQPRLGLPSRDYYECTGIYKEACTAYVDFMISVARLIRQEQSLPIDENQLSLEMNKVMELEKEIANATTKPEDRNDPMLLYNKMTLAKLQNNFSLEVNGKSFSWSNFTNEIMSTVNINIQNEEEVVVYAPEYLTKLKPILTKYSPRDLQNLMSWRFIMDLVSSLSRNYKESRNAFRKALYGTTSETATWRRCANYVNGNMENAVGRLYVEAAFAGESKHVVEDLIAQIREVFIQTLDDLTWMDAETKKKAEEKALAIKERIGYPDDIISNENKLNNEYLELNYREDEYFENIIQNLKFSQSKQLKKLREKVDKDEWISGAAVVNAFYSSGRNQIVFPAGILQPPFFSAQQSNSLNYGGIGMVIGHEITHGFDDNGRNFNKDGDLVDWWTQQSANNFKDQSQCMVYQYGNFSWDLAGGQHLNGINTLGENIADNGGIGQAYRAYQNYVKKNGEEKLLPGLDLNHKQLFFLNFAQVWCGTYRPEYAVNSIKTDVHSPGNFRIIGTLQNSAEFADAFHCRKNSYMNPERKCRVW</sequence>
<name>NEP_MOUSE</name>
<evidence type="ECO:0000250" key="1">
    <source>
        <dbReference type="UniProtKB" id="P07861"/>
    </source>
</evidence>
<evidence type="ECO:0000250" key="2">
    <source>
        <dbReference type="UniProtKB" id="P08473"/>
    </source>
</evidence>
<evidence type="ECO:0000255" key="3"/>
<evidence type="ECO:0000255" key="4">
    <source>
        <dbReference type="PROSITE-ProRule" id="PRU01233"/>
    </source>
</evidence>
<evidence type="ECO:0000255" key="5">
    <source>
        <dbReference type="PROSITE-ProRule" id="PRU10095"/>
    </source>
</evidence>
<evidence type="ECO:0000269" key="6">
    <source>
    </source>
</evidence>
<evidence type="ECO:0000269" key="7">
    <source>
    </source>
</evidence>
<evidence type="ECO:0000269" key="8">
    <source>
    </source>
</evidence>
<evidence type="ECO:0000303" key="9">
    <source>
    </source>
</evidence>
<evidence type="ECO:0000303" key="10">
    <source>
    </source>
</evidence>
<evidence type="ECO:0000303" key="11">
    <source>
    </source>
</evidence>
<evidence type="ECO:0000305" key="12"/>
<evidence type="ECO:0000312" key="13">
    <source>
        <dbReference type="MGI" id="MGI:97004"/>
    </source>
</evidence>
<evidence type="ECO:0007744" key="14">
    <source>
    </source>
</evidence>
<evidence type="ECO:0007829" key="15">
    <source>
        <dbReference type="PDB" id="2YVC"/>
    </source>
</evidence>
<proteinExistence type="evidence at protein level"/>
<organism>
    <name type="scientific">Mus musculus</name>
    <name type="common">Mouse</name>
    <dbReference type="NCBI Taxonomy" id="10090"/>
    <lineage>
        <taxon>Eukaryota</taxon>
        <taxon>Metazoa</taxon>
        <taxon>Chordata</taxon>
        <taxon>Craniata</taxon>
        <taxon>Vertebrata</taxon>
        <taxon>Euteleostomi</taxon>
        <taxon>Mammalia</taxon>
        <taxon>Eutheria</taxon>
        <taxon>Euarchontoglires</taxon>
        <taxon>Glires</taxon>
        <taxon>Rodentia</taxon>
        <taxon>Myomorpha</taxon>
        <taxon>Muroidea</taxon>
        <taxon>Muridae</taxon>
        <taxon>Murinae</taxon>
        <taxon>Mus</taxon>
        <taxon>Mus</taxon>
    </lineage>
</organism>
<protein>
    <recommendedName>
        <fullName>Neprilysin</fullName>
        <ecNumber evidence="2">3.4.24.11</ecNumber>
    </recommendedName>
    <alternativeName>
        <fullName>Atriopeptidase</fullName>
    </alternativeName>
    <alternativeName>
        <fullName>Enkephalinase</fullName>
    </alternativeName>
    <alternativeName>
        <fullName evidence="9">Neutral endopeptidase 24.11</fullName>
        <shortName>NEP</shortName>
        <shortName>Neutral endopeptidase</shortName>
    </alternativeName>
    <alternativeName>
        <fullName evidence="10">Skin fibroblast elastase</fullName>
        <shortName evidence="10">SFE</shortName>
    </alternativeName>
    <cdAntigenName evidence="9">CD10</cdAntigenName>
</protein>